<name>NADA_PECCP</name>
<gene>
    <name evidence="1" type="primary">nadA</name>
    <name type="ordered locus">PC1_1254</name>
</gene>
<dbReference type="EC" id="2.5.1.72" evidence="1"/>
<dbReference type="EMBL" id="CP001657">
    <property type="protein sequence ID" value="ACT12302.1"/>
    <property type="molecule type" value="Genomic_DNA"/>
</dbReference>
<dbReference type="RefSeq" id="WP_015839531.1">
    <property type="nucleotide sequence ID" value="NC_012917.1"/>
</dbReference>
<dbReference type="SMR" id="C6DCF2"/>
<dbReference type="STRING" id="561230.PC1_1254"/>
<dbReference type="KEGG" id="pct:PC1_1254"/>
<dbReference type="eggNOG" id="COG0379">
    <property type="taxonomic scope" value="Bacteria"/>
</dbReference>
<dbReference type="HOGENOM" id="CLU_047382_1_0_6"/>
<dbReference type="OrthoDB" id="9801204at2"/>
<dbReference type="UniPathway" id="UPA00253">
    <property type="reaction ID" value="UER00327"/>
</dbReference>
<dbReference type="Proteomes" id="UP000002736">
    <property type="component" value="Chromosome"/>
</dbReference>
<dbReference type="GO" id="GO:0005829">
    <property type="term" value="C:cytosol"/>
    <property type="evidence" value="ECO:0007669"/>
    <property type="project" value="TreeGrafter"/>
</dbReference>
<dbReference type="GO" id="GO:0051539">
    <property type="term" value="F:4 iron, 4 sulfur cluster binding"/>
    <property type="evidence" value="ECO:0007669"/>
    <property type="project" value="UniProtKB-KW"/>
</dbReference>
<dbReference type="GO" id="GO:0046872">
    <property type="term" value="F:metal ion binding"/>
    <property type="evidence" value="ECO:0007669"/>
    <property type="project" value="UniProtKB-KW"/>
</dbReference>
<dbReference type="GO" id="GO:0008987">
    <property type="term" value="F:quinolinate synthetase A activity"/>
    <property type="evidence" value="ECO:0007669"/>
    <property type="project" value="UniProtKB-UniRule"/>
</dbReference>
<dbReference type="GO" id="GO:0034628">
    <property type="term" value="P:'de novo' NAD biosynthetic process from L-aspartate"/>
    <property type="evidence" value="ECO:0007669"/>
    <property type="project" value="TreeGrafter"/>
</dbReference>
<dbReference type="FunFam" id="3.40.50.10800:FF:000003">
    <property type="entry name" value="Quinolinate synthase A"/>
    <property type="match status" value="1"/>
</dbReference>
<dbReference type="Gene3D" id="3.40.50.10800">
    <property type="entry name" value="NadA-like"/>
    <property type="match status" value="3"/>
</dbReference>
<dbReference type="HAMAP" id="MF_00567">
    <property type="entry name" value="NadA_type1"/>
    <property type="match status" value="1"/>
</dbReference>
<dbReference type="InterPro" id="IPR003473">
    <property type="entry name" value="NadA"/>
</dbReference>
<dbReference type="InterPro" id="IPR036094">
    <property type="entry name" value="NadA_sf"/>
</dbReference>
<dbReference type="InterPro" id="IPR023513">
    <property type="entry name" value="Quinolinate_synth_A_type1"/>
</dbReference>
<dbReference type="NCBIfam" id="TIGR00550">
    <property type="entry name" value="nadA"/>
    <property type="match status" value="1"/>
</dbReference>
<dbReference type="NCBIfam" id="NF006877">
    <property type="entry name" value="PRK09375.1-1"/>
    <property type="match status" value="1"/>
</dbReference>
<dbReference type="NCBIfam" id="NF006878">
    <property type="entry name" value="PRK09375.1-2"/>
    <property type="match status" value="1"/>
</dbReference>
<dbReference type="PANTHER" id="PTHR30573:SF0">
    <property type="entry name" value="QUINOLINATE SYNTHASE, CHLOROPLASTIC"/>
    <property type="match status" value="1"/>
</dbReference>
<dbReference type="PANTHER" id="PTHR30573">
    <property type="entry name" value="QUINOLINATE SYNTHETASE A"/>
    <property type="match status" value="1"/>
</dbReference>
<dbReference type="Pfam" id="PF02445">
    <property type="entry name" value="NadA"/>
    <property type="match status" value="1"/>
</dbReference>
<dbReference type="SUPFAM" id="SSF142754">
    <property type="entry name" value="NadA-like"/>
    <property type="match status" value="1"/>
</dbReference>
<proteinExistence type="inferred from homology"/>
<comment type="function">
    <text evidence="1">Catalyzes the condensation of iminoaspartate with dihydroxyacetone phosphate to form quinolinate.</text>
</comment>
<comment type="catalytic activity">
    <reaction evidence="1">
        <text>iminosuccinate + dihydroxyacetone phosphate = quinolinate + phosphate + 2 H2O + H(+)</text>
        <dbReference type="Rhea" id="RHEA:25888"/>
        <dbReference type="ChEBI" id="CHEBI:15377"/>
        <dbReference type="ChEBI" id="CHEBI:15378"/>
        <dbReference type="ChEBI" id="CHEBI:29959"/>
        <dbReference type="ChEBI" id="CHEBI:43474"/>
        <dbReference type="ChEBI" id="CHEBI:57642"/>
        <dbReference type="ChEBI" id="CHEBI:77875"/>
        <dbReference type="EC" id="2.5.1.72"/>
    </reaction>
    <physiologicalReaction direction="left-to-right" evidence="1">
        <dbReference type="Rhea" id="RHEA:25889"/>
    </physiologicalReaction>
</comment>
<comment type="cofactor">
    <cofactor evidence="1">
        <name>[4Fe-4S] cluster</name>
        <dbReference type="ChEBI" id="CHEBI:49883"/>
    </cofactor>
    <text evidence="1">Binds 1 [4Fe-4S] cluster per subunit.</text>
</comment>
<comment type="pathway">
    <text evidence="1">Cofactor biosynthesis; NAD(+) biosynthesis; quinolinate from iminoaspartate: step 1/1.</text>
</comment>
<comment type="subcellular location">
    <subcellularLocation>
        <location evidence="1">Cytoplasm</location>
    </subcellularLocation>
</comment>
<comment type="similarity">
    <text evidence="1">Belongs to the quinolinate synthase family. Type 1 subfamily.</text>
</comment>
<evidence type="ECO:0000255" key="1">
    <source>
        <dbReference type="HAMAP-Rule" id="MF_00567"/>
    </source>
</evidence>
<keyword id="KW-0004">4Fe-4S</keyword>
<keyword id="KW-0963">Cytoplasm</keyword>
<keyword id="KW-0408">Iron</keyword>
<keyword id="KW-0411">Iron-sulfur</keyword>
<keyword id="KW-0479">Metal-binding</keyword>
<keyword id="KW-0662">Pyridine nucleotide biosynthesis</keyword>
<keyword id="KW-0808">Transferase</keyword>
<protein>
    <recommendedName>
        <fullName evidence="1">Quinolinate synthase</fullName>
        <ecNumber evidence="1">2.5.1.72</ecNumber>
    </recommendedName>
</protein>
<sequence>MSILFDSNETIYPFPPKPRPLSAEAKQHYRSRIKTLLRERNAVMVAHYYTDPEIQALAEETGGCVADSLEMARFGSTHSASTLLVAGVRFMGETAKILNPEKTILMPTLEAECSLDLGCPVDEFSRFCDEHPDRMVVVYANTSAAVKARADWVVTSSIAVELIEHLDSLGEKIIWAPDRHLGSYVQKQTGADVLCWQGACIVHDEFKTQALKRMKILYPDAAILVHPESPQSVVEMADAVGSTSQLIQAAKTLPQRELIVATDRGIFYKMQQACPEKTLLEAPTAGEGATCRSCAHCPWMAMNGLEAIANGLEQGGRAHEIHVDAALREGALIPLNRMLDFAASLKLRVKGNA</sequence>
<reference key="1">
    <citation type="submission" date="2009-07" db="EMBL/GenBank/DDBJ databases">
        <title>Complete sequence of Pectobacterium carotovorum subsp. carotovorum PC1.</title>
        <authorList>
            <consortium name="US DOE Joint Genome Institute"/>
            <person name="Lucas S."/>
            <person name="Copeland A."/>
            <person name="Lapidus A."/>
            <person name="Glavina del Rio T."/>
            <person name="Tice H."/>
            <person name="Bruce D."/>
            <person name="Goodwin L."/>
            <person name="Pitluck S."/>
            <person name="Munk A.C."/>
            <person name="Brettin T."/>
            <person name="Detter J.C."/>
            <person name="Han C."/>
            <person name="Tapia R."/>
            <person name="Larimer F."/>
            <person name="Land M."/>
            <person name="Hauser L."/>
            <person name="Kyrpides N."/>
            <person name="Mikhailova N."/>
            <person name="Balakrishnan V."/>
            <person name="Glasner J."/>
            <person name="Perna N.T."/>
        </authorList>
    </citation>
    <scope>NUCLEOTIDE SEQUENCE [LARGE SCALE GENOMIC DNA]</scope>
    <source>
        <strain>PC1</strain>
    </source>
</reference>
<feature type="chain" id="PRO_1000212076" description="Quinolinate synthase">
    <location>
        <begin position="1"/>
        <end position="353"/>
    </location>
</feature>
<feature type="binding site" evidence="1">
    <location>
        <position position="47"/>
    </location>
    <ligand>
        <name>iminosuccinate</name>
        <dbReference type="ChEBI" id="CHEBI:77875"/>
    </ligand>
</feature>
<feature type="binding site" evidence="1">
    <location>
        <position position="68"/>
    </location>
    <ligand>
        <name>iminosuccinate</name>
        <dbReference type="ChEBI" id="CHEBI:77875"/>
    </ligand>
</feature>
<feature type="binding site" evidence="1">
    <location>
        <position position="113"/>
    </location>
    <ligand>
        <name>[4Fe-4S] cluster</name>
        <dbReference type="ChEBI" id="CHEBI:49883"/>
    </ligand>
</feature>
<feature type="binding site" evidence="1">
    <location>
        <begin position="139"/>
        <end position="141"/>
    </location>
    <ligand>
        <name>iminosuccinate</name>
        <dbReference type="ChEBI" id="CHEBI:77875"/>
    </ligand>
</feature>
<feature type="binding site" evidence="1">
    <location>
        <position position="156"/>
    </location>
    <ligand>
        <name>iminosuccinate</name>
        <dbReference type="ChEBI" id="CHEBI:77875"/>
    </ligand>
</feature>
<feature type="binding site" evidence="1">
    <location>
        <position position="200"/>
    </location>
    <ligand>
        <name>[4Fe-4S] cluster</name>
        <dbReference type="ChEBI" id="CHEBI:49883"/>
    </ligand>
</feature>
<feature type="binding site" evidence="1">
    <location>
        <begin position="226"/>
        <end position="228"/>
    </location>
    <ligand>
        <name>iminosuccinate</name>
        <dbReference type="ChEBI" id="CHEBI:77875"/>
    </ligand>
</feature>
<feature type="binding site" evidence="1">
    <location>
        <position position="243"/>
    </location>
    <ligand>
        <name>iminosuccinate</name>
        <dbReference type="ChEBI" id="CHEBI:77875"/>
    </ligand>
</feature>
<feature type="binding site" evidence="1">
    <location>
        <position position="297"/>
    </location>
    <ligand>
        <name>[4Fe-4S] cluster</name>
        <dbReference type="ChEBI" id="CHEBI:49883"/>
    </ligand>
</feature>
<accession>C6DCF2</accession>
<organism>
    <name type="scientific">Pectobacterium carotovorum subsp. carotovorum (strain PC1)</name>
    <dbReference type="NCBI Taxonomy" id="561230"/>
    <lineage>
        <taxon>Bacteria</taxon>
        <taxon>Pseudomonadati</taxon>
        <taxon>Pseudomonadota</taxon>
        <taxon>Gammaproteobacteria</taxon>
        <taxon>Enterobacterales</taxon>
        <taxon>Pectobacteriaceae</taxon>
        <taxon>Pectobacterium</taxon>
    </lineage>
</organism>